<name>PQQA_METEA</name>
<keyword id="KW-0884">PQQ biosynthesis</keyword>
<keyword id="KW-1185">Reference proteome</keyword>
<accession>Q49148</accession>
<accession>C5B131</accession>
<gene>
    <name type="primary">pqqA</name>
    <name type="synonym">pqqD</name>
    <name type="ordered locus">MexAM1_META1p1751</name>
</gene>
<reference key="1">
    <citation type="journal article" date="1994" name="J. Bacteriol.">
        <title>Isolation, phenotypic characterization, and complementation analysis of mutants of Methylobacterium extorquens AM1 unable to synthesize pyrroloquinoline quinone and sequences of pqqD, pqqG, and pqqC.</title>
        <authorList>
            <person name="Morris C.J."/>
            <person name="Biville F."/>
            <person name="Turlin E."/>
            <person name="Lee E."/>
            <person name="Ellermann K."/>
            <person name="Fan W.H."/>
            <person name="Ramamoorthi R."/>
            <person name="Springer A.L."/>
            <person name="Lidstrom M.E."/>
        </authorList>
    </citation>
    <scope>NUCLEOTIDE SEQUENCE [GENOMIC DNA]</scope>
</reference>
<reference key="2">
    <citation type="journal article" date="2009" name="PLoS ONE">
        <title>Methylobacterium genome sequences: a reference blueprint to investigate microbial metabolism of C1 compounds from natural and industrial sources.</title>
        <authorList>
            <person name="Vuilleumier S."/>
            <person name="Chistoserdova L."/>
            <person name="Lee M.-C."/>
            <person name="Bringel F."/>
            <person name="Lajus A."/>
            <person name="Zhou Y."/>
            <person name="Gourion B."/>
            <person name="Barbe V."/>
            <person name="Chang J."/>
            <person name="Cruveiller S."/>
            <person name="Dossat C."/>
            <person name="Gillett W."/>
            <person name="Gruffaz C."/>
            <person name="Haugen E."/>
            <person name="Hourcade E."/>
            <person name="Levy R."/>
            <person name="Mangenot S."/>
            <person name="Muller E."/>
            <person name="Nadalig T."/>
            <person name="Pagni M."/>
            <person name="Penny C."/>
            <person name="Peyraud R."/>
            <person name="Robinson D.G."/>
            <person name="Roche D."/>
            <person name="Rouy Z."/>
            <person name="Saenampechek C."/>
            <person name="Salvignol G."/>
            <person name="Vallenet D."/>
            <person name="Wu Z."/>
            <person name="Marx C.J."/>
            <person name="Vorholt J.A."/>
            <person name="Olson M.V."/>
            <person name="Kaul R."/>
            <person name="Weissenbach J."/>
            <person name="Medigue C."/>
            <person name="Lidstrom M.E."/>
        </authorList>
    </citation>
    <scope>NUCLEOTIDE SEQUENCE [LARGE SCALE GENOMIC DNA]</scope>
    <source>
        <strain>ATCC 14718 / DSM 1338 / JCM 2805 / NCIMB 9133 / AM1</strain>
    </source>
</reference>
<reference key="3">
    <citation type="journal article" date="1998" name="Microbiology">
        <title>pqqA is not required for biosynthesis of pyrroloquinoline quinone in Methylobacterium extorquens AM1.</title>
        <authorList>
            <person name="Toyama H."/>
            <person name="Lidstrom M.E."/>
        </authorList>
    </citation>
    <scope>FUNCTION</scope>
</reference>
<protein>
    <recommendedName>
        <fullName>Coenzyme PQQ synthesis protein A</fullName>
    </recommendedName>
    <alternativeName>
        <fullName>Coenzyme PQQ synthesis protein D</fullName>
    </alternativeName>
    <alternativeName>
        <fullName>Pyrroloquinoline quinone biosynthesis protein A</fullName>
    </alternativeName>
</protein>
<comment type="function">
    <text evidence="2">Required for coenzyme pyrroloquinoline quinone (PQQ) biosynthesis. PQQ is probably formed by cross-linking a specific glutamate to a specific tyrosine residue and excising these residues from the peptide. There seems to be another source for PQQ in this bacteria only.</text>
</comment>
<comment type="pathway">
    <text>Cofactor biosynthesis; pyrroloquinoline quinone biosynthesis.</text>
</comment>
<comment type="similarity">
    <text evidence="3">Belongs to the PqqA family.</text>
</comment>
<feature type="chain" id="PRO_0000220311" description="Coenzyme PQQ synthesis protein A">
    <location>
        <begin position="1"/>
        <end position="29"/>
    </location>
</feature>
<feature type="cross-link" description="Pyrroloquinoline quinone (Glu-Tyr)" evidence="1">
    <location>
        <begin position="16"/>
        <end position="20"/>
    </location>
</feature>
<sequence>MKWAAPIVSEICVGMEVTSYESAEIDTFN</sequence>
<evidence type="ECO:0000250" key="1"/>
<evidence type="ECO:0000269" key="2">
    <source>
    </source>
</evidence>
<evidence type="ECO:0000305" key="3"/>
<proteinExistence type="inferred from homology"/>
<organism>
    <name type="scientific">Methylorubrum extorquens (strain ATCC 14718 / DSM 1338 / JCM 2805 / NCIMB 9133 / AM1)</name>
    <name type="common">Methylobacterium extorquens</name>
    <dbReference type="NCBI Taxonomy" id="272630"/>
    <lineage>
        <taxon>Bacteria</taxon>
        <taxon>Pseudomonadati</taxon>
        <taxon>Pseudomonadota</taxon>
        <taxon>Alphaproteobacteria</taxon>
        <taxon>Hyphomicrobiales</taxon>
        <taxon>Methylobacteriaceae</taxon>
        <taxon>Methylorubrum</taxon>
    </lineage>
</organism>
<dbReference type="EMBL" id="L25889">
    <property type="protein sequence ID" value="AAA17878.1"/>
    <property type="molecule type" value="Unassigned_DNA"/>
</dbReference>
<dbReference type="EMBL" id="CP001510">
    <property type="protein sequence ID" value="ACS39595.1"/>
    <property type="molecule type" value="Genomic_DNA"/>
</dbReference>
<dbReference type="PIR" id="A55527">
    <property type="entry name" value="A55527"/>
</dbReference>
<dbReference type="RefSeq" id="WP_012317526.1">
    <property type="nucleotide sequence ID" value="NC_012808.1"/>
</dbReference>
<dbReference type="STRING" id="272630.MexAM1_META1p1751"/>
<dbReference type="GeneID" id="96604092"/>
<dbReference type="KEGG" id="mea:Mex_1p1751"/>
<dbReference type="HOGENOM" id="CLU_219399_0_1_5"/>
<dbReference type="UniPathway" id="UPA00539"/>
<dbReference type="Proteomes" id="UP000009081">
    <property type="component" value="Chromosome"/>
</dbReference>
<dbReference type="GO" id="GO:0018189">
    <property type="term" value="P:pyrroloquinoline quinone biosynthetic process"/>
    <property type="evidence" value="ECO:0007669"/>
    <property type="project" value="UniProtKB-UniRule"/>
</dbReference>
<dbReference type="HAMAP" id="MF_00656">
    <property type="entry name" value="PQQ_syn_PqqA"/>
    <property type="match status" value="1"/>
</dbReference>
<dbReference type="InterPro" id="IPR011725">
    <property type="entry name" value="PQQ_synth_PqqA"/>
</dbReference>
<dbReference type="NCBIfam" id="TIGR02107">
    <property type="entry name" value="PQQ_syn_pqqA"/>
    <property type="match status" value="1"/>
</dbReference>
<dbReference type="Pfam" id="PF08042">
    <property type="entry name" value="PqqA"/>
    <property type="match status" value="1"/>
</dbReference>